<proteinExistence type="inferred from homology"/>
<comment type="function">
    <text evidence="1">Bifunctional serine/threonine kinase and phosphorylase involved in the regulation of the phosphoenolpyruvate synthase (PEPS) by catalyzing its phosphorylation/dephosphorylation.</text>
</comment>
<comment type="catalytic activity">
    <reaction evidence="1">
        <text>[pyruvate, water dikinase] + ADP = [pyruvate, water dikinase]-phosphate + AMP + H(+)</text>
        <dbReference type="Rhea" id="RHEA:46020"/>
        <dbReference type="Rhea" id="RHEA-COMP:11425"/>
        <dbReference type="Rhea" id="RHEA-COMP:11426"/>
        <dbReference type="ChEBI" id="CHEBI:15378"/>
        <dbReference type="ChEBI" id="CHEBI:43176"/>
        <dbReference type="ChEBI" id="CHEBI:68546"/>
        <dbReference type="ChEBI" id="CHEBI:456215"/>
        <dbReference type="ChEBI" id="CHEBI:456216"/>
        <dbReference type="EC" id="2.7.11.33"/>
    </reaction>
</comment>
<comment type="catalytic activity">
    <reaction evidence="1">
        <text>[pyruvate, water dikinase]-phosphate + phosphate + H(+) = [pyruvate, water dikinase] + diphosphate</text>
        <dbReference type="Rhea" id="RHEA:48580"/>
        <dbReference type="Rhea" id="RHEA-COMP:11425"/>
        <dbReference type="Rhea" id="RHEA-COMP:11426"/>
        <dbReference type="ChEBI" id="CHEBI:15378"/>
        <dbReference type="ChEBI" id="CHEBI:33019"/>
        <dbReference type="ChEBI" id="CHEBI:43176"/>
        <dbReference type="ChEBI" id="CHEBI:43474"/>
        <dbReference type="ChEBI" id="CHEBI:68546"/>
        <dbReference type="EC" id="2.7.4.28"/>
    </reaction>
</comment>
<comment type="similarity">
    <text evidence="1">Belongs to the pyruvate, phosphate/water dikinase regulatory protein family. PSRP subfamily.</text>
</comment>
<protein>
    <recommendedName>
        <fullName evidence="1">Putative phosphoenolpyruvate synthase regulatory protein</fullName>
        <shortName evidence="1">PEP synthase regulatory protein</shortName>
        <shortName evidence="1">PSRP</shortName>
        <ecNumber evidence="1">2.7.11.33</ecNumber>
        <ecNumber evidence="1">2.7.4.28</ecNumber>
    </recommendedName>
    <alternativeName>
        <fullName evidence="1">Pyruvate, water dikinase regulatory protein</fullName>
    </alternativeName>
</protein>
<sequence length="273" mass="30731">MERCVFYISDGTAITAEVLGHAVLSQFPINVTTFTLPFVENAARAQSVCKQINEIYQDTGVRPLVFYSIISLEVREIIQRSEGFCQDIVQALVAPLQGELGVPPQPVLNRTHGLTESNLDKYDARIAAIDYALAHDDGISLRNLDQAQVILLGVSRCGKTPTSLYLAMQFGIRAANYPFIADDMDNLQLPAALKPFQHKLFGLTINPERLAAIREERRENSRYASLRQCRMEVGEVEALFRKNQIRYLNSTNYSVEEISTKILDILGMSRRMF</sequence>
<name>PSRP_YERPP</name>
<feature type="chain" id="PRO_0000316760" description="Putative phosphoenolpyruvate synthase regulatory protein">
    <location>
        <begin position="1"/>
        <end position="273"/>
    </location>
</feature>
<feature type="binding site" evidence="1">
    <location>
        <begin position="153"/>
        <end position="160"/>
    </location>
    <ligand>
        <name>ADP</name>
        <dbReference type="ChEBI" id="CHEBI:456216"/>
    </ligand>
</feature>
<organism>
    <name type="scientific">Yersinia pestis (strain Pestoides F)</name>
    <dbReference type="NCBI Taxonomy" id="386656"/>
    <lineage>
        <taxon>Bacteria</taxon>
        <taxon>Pseudomonadati</taxon>
        <taxon>Pseudomonadota</taxon>
        <taxon>Gammaproteobacteria</taxon>
        <taxon>Enterobacterales</taxon>
        <taxon>Yersiniaceae</taxon>
        <taxon>Yersinia</taxon>
    </lineage>
</organism>
<evidence type="ECO:0000255" key="1">
    <source>
        <dbReference type="HAMAP-Rule" id="MF_01062"/>
    </source>
</evidence>
<keyword id="KW-0418">Kinase</keyword>
<keyword id="KW-0547">Nucleotide-binding</keyword>
<keyword id="KW-0723">Serine/threonine-protein kinase</keyword>
<keyword id="KW-0808">Transferase</keyword>
<gene>
    <name type="ordered locus">YPDSF_0739</name>
</gene>
<reference key="1">
    <citation type="submission" date="2007-02" db="EMBL/GenBank/DDBJ databases">
        <title>Complete sequence of chromosome of Yersinia pestis Pestoides F.</title>
        <authorList>
            <consortium name="US DOE Joint Genome Institute"/>
            <person name="Copeland A."/>
            <person name="Lucas S."/>
            <person name="Lapidus A."/>
            <person name="Barry K."/>
            <person name="Detter J.C."/>
            <person name="Glavina del Rio T."/>
            <person name="Hammon N."/>
            <person name="Israni S."/>
            <person name="Dalin E."/>
            <person name="Tice H."/>
            <person name="Pitluck S."/>
            <person name="Di Bartolo G."/>
            <person name="Chain P."/>
            <person name="Malfatti S."/>
            <person name="Shin M."/>
            <person name="Vergez L."/>
            <person name="Schmutz J."/>
            <person name="Larimer F."/>
            <person name="Land M."/>
            <person name="Hauser L."/>
            <person name="Worsham P."/>
            <person name="Chu M."/>
            <person name="Bearden S."/>
            <person name="Garcia E."/>
            <person name="Richardson P."/>
        </authorList>
    </citation>
    <scope>NUCLEOTIDE SEQUENCE [LARGE SCALE GENOMIC DNA]</scope>
    <source>
        <strain>Pestoides F</strain>
    </source>
</reference>
<dbReference type="EC" id="2.7.11.33" evidence="1"/>
<dbReference type="EC" id="2.7.4.28" evidence="1"/>
<dbReference type="EMBL" id="CP000668">
    <property type="protein sequence ID" value="ABP39145.1"/>
    <property type="molecule type" value="Genomic_DNA"/>
</dbReference>
<dbReference type="RefSeq" id="WP_002211814.1">
    <property type="nucleotide sequence ID" value="NZ_CP009715.1"/>
</dbReference>
<dbReference type="SMR" id="A4TIN3"/>
<dbReference type="KEGG" id="ypp:YPDSF_0739"/>
<dbReference type="PATRIC" id="fig|386656.14.peg.3129"/>
<dbReference type="GO" id="GO:0043531">
    <property type="term" value="F:ADP binding"/>
    <property type="evidence" value="ECO:0007669"/>
    <property type="project" value="UniProtKB-UniRule"/>
</dbReference>
<dbReference type="GO" id="GO:0005524">
    <property type="term" value="F:ATP binding"/>
    <property type="evidence" value="ECO:0007669"/>
    <property type="project" value="InterPro"/>
</dbReference>
<dbReference type="GO" id="GO:0003677">
    <property type="term" value="F:DNA binding"/>
    <property type="evidence" value="ECO:0007669"/>
    <property type="project" value="InterPro"/>
</dbReference>
<dbReference type="GO" id="GO:0016776">
    <property type="term" value="F:phosphotransferase activity, phosphate group as acceptor"/>
    <property type="evidence" value="ECO:0007669"/>
    <property type="project" value="UniProtKB-UniRule"/>
</dbReference>
<dbReference type="GO" id="GO:0004674">
    <property type="term" value="F:protein serine/threonine kinase activity"/>
    <property type="evidence" value="ECO:0007669"/>
    <property type="project" value="UniProtKB-UniRule"/>
</dbReference>
<dbReference type="GO" id="GO:0006355">
    <property type="term" value="P:regulation of DNA-templated transcription"/>
    <property type="evidence" value="ECO:0007669"/>
    <property type="project" value="InterPro"/>
</dbReference>
<dbReference type="HAMAP" id="MF_01062">
    <property type="entry name" value="PSRP"/>
    <property type="match status" value="1"/>
</dbReference>
<dbReference type="InterPro" id="IPR005177">
    <property type="entry name" value="Kinase-pyrophosphorylase"/>
</dbReference>
<dbReference type="InterPro" id="IPR026530">
    <property type="entry name" value="PSRP"/>
</dbReference>
<dbReference type="InterPro" id="IPR008917">
    <property type="entry name" value="TF_DNA-bd_sf"/>
</dbReference>
<dbReference type="NCBIfam" id="NF003742">
    <property type="entry name" value="PRK05339.1"/>
    <property type="match status" value="1"/>
</dbReference>
<dbReference type="PANTHER" id="PTHR31756">
    <property type="entry name" value="PYRUVATE, PHOSPHATE DIKINASE REGULATORY PROTEIN 1, CHLOROPLASTIC"/>
    <property type="match status" value="1"/>
</dbReference>
<dbReference type="PANTHER" id="PTHR31756:SF3">
    <property type="entry name" value="PYRUVATE, PHOSPHATE DIKINASE REGULATORY PROTEIN 1, CHLOROPLASTIC"/>
    <property type="match status" value="1"/>
</dbReference>
<dbReference type="Pfam" id="PF03618">
    <property type="entry name" value="Kinase-PPPase"/>
    <property type="match status" value="1"/>
</dbReference>
<dbReference type="SUPFAM" id="SSF47454">
    <property type="entry name" value="A DNA-binding domain in eukaryotic transcription factors"/>
    <property type="match status" value="1"/>
</dbReference>
<accession>A4TIN3</accession>